<gene>
    <name type="primary">PMP22</name>
    <name type="synonym">GAS3</name>
</gene>
<reference key="1">
    <citation type="journal article" date="1992" name="Nat. Genet.">
        <title>The gene for the peripheral myelin protein PMP-22 is a candidate for Charcot-Marie-Tooth disease type 1A.</title>
        <authorList>
            <person name="Patel P.I."/>
            <person name="Roa B.B."/>
            <person name="Welcher A.A."/>
            <person name="Schoener-Scott R."/>
            <person name="Trask B."/>
            <person name="Pentao L."/>
            <person name="Snipes G.J."/>
            <person name="Garcia C.A."/>
            <person name="Francke U."/>
            <person name="Shooter E.M."/>
            <person name="Lupski J.R."/>
            <person name="Suter U."/>
        </authorList>
    </citation>
    <scope>NUCLEOTIDE SEQUENCE [MRNA]</scope>
</reference>
<reference key="2">
    <citation type="journal article" date="1992" name="Biochem. Biophys. Res. Commun.">
        <title>Isolation and sequence determination of cDNA encoding PMP-22 (PAS-II/SR13/Gas-3) of human peripheral myelin.</title>
        <authorList>
            <person name="Hayasaka K."/>
            <person name="Himoro M."/>
            <person name="Nanao K."/>
            <person name="Sato W."/>
            <person name="Miura M."/>
            <person name="Uyemura K."/>
            <person name="Takahashi E."/>
            <person name="Takada G."/>
        </authorList>
    </citation>
    <scope>NUCLEOTIDE SEQUENCE [MRNA]</scope>
    <source>
        <tissue>Spinal cord</tissue>
    </source>
</reference>
<reference key="3">
    <citation type="journal article" date="1992" name="Nat. Genet.">
        <title>Identical point mutations of PMP-22 in Trembler-J mouse and Charcot-Marie-Tooth disease type 1A.</title>
        <authorList>
            <person name="Valentijn L.J."/>
            <person name="Baas F."/>
            <person name="Wolterman R.A."/>
            <person name="Hoogendijk J.E."/>
            <person name="van den Bosch N.H.A."/>
            <person name="Zorn I."/>
            <person name="Gabreeels-Festen A.A.W.M."/>
            <person name="de Visser M."/>
            <person name="Bolhuis P.A."/>
        </authorList>
    </citation>
    <scope>NUCLEOTIDE SEQUENCE [MRNA]</scope>
    <scope>VARIANT CMT1A PRO-16</scope>
</reference>
<reference key="4">
    <citation type="journal article" date="1993" name="Gene">
        <title>Sequence of human GAS3/PMP22 full-length cDNA.</title>
        <authorList>
            <person name="Edomi P."/>
            <person name="Martinotti A."/>
            <person name="Colombo M.P."/>
            <person name="Schneider C."/>
        </authorList>
    </citation>
    <scope>NUCLEOTIDE SEQUENCE [MRNA]</scope>
</reference>
<reference key="5">
    <citation type="journal article" date="2004" name="Genome Res.">
        <title>The status, quality, and expansion of the NIH full-length cDNA project: the Mammalian Gene Collection (MGC).</title>
        <authorList>
            <consortium name="The MGC Project Team"/>
        </authorList>
    </citation>
    <scope>NUCLEOTIDE SEQUENCE [LARGE SCALE MRNA]</scope>
    <source>
        <tissue>Kidney</tissue>
    </source>
</reference>
<reference key="6">
    <citation type="journal article" date="1992" name="Hum. Mol. Genet.">
        <title>Isolation and mapping to 17p12-13 of the human homologous of the murine growth arrest specific Gas-3 gene.</title>
        <authorList>
            <person name="Martinotti A."/>
            <person name="Cariani C.T."/>
            <person name="Melani C."/>
            <person name="Sozzi G."/>
            <person name="Spurr N.K."/>
            <person name="Pierotti M.A."/>
            <person name="Colombo M.P."/>
        </authorList>
    </citation>
    <scope>NUCLEOTIDE SEQUENCE [MRNA] OF 61-160</scope>
    <source>
        <tissue>Fetal fibroblast</tissue>
    </source>
</reference>
<reference key="7">
    <citation type="journal article" date="1994" name="Adv. Hum. Genet.">
        <title>Molecular genetics of Charcot-Marie-Tooth neuropathy.</title>
        <authorList>
            <person name="Roa B.B."/>
            <person name="Lupski J.R."/>
        </authorList>
    </citation>
    <scope>REVIEW ON CMT1A VARIANTS</scope>
</reference>
<reference key="8">
    <citation type="journal article" date="1994" name="Trends Genet.">
        <title>Charcot-Marie-Tooth disease: a new paradigm for the mechanism of inherited disease.</title>
        <authorList>
            <person name="Patel P.I."/>
            <person name="Lupski J.R."/>
        </authorList>
    </citation>
    <scope>REVIEW ON CMT1A VARIANTS</scope>
</reference>
<reference key="9">
    <citation type="journal article" date="1999" name="Hum. Mutat.">
        <title>Mutations in the peripheral myelin genes and associated genes in inherited peripheral neuropathies.</title>
        <authorList>
            <person name="Nelis E."/>
            <person name="Haites N."/>
            <person name="van Broeckhoven C."/>
        </authorList>
    </citation>
    <scope>REVIEW ON CMT1A AND DSS VARIANTS</scope>
    <scope>VARIANT DSS PRO-19</scope>
</reference>
<reference key="10">
    <citation type="journal article" date="2011" name="Structure">
        <title>Structural basis for the Trembler-J phenotype of Charcot-Marie-Tooth disease.</title>
        <authorList>
            <person name="Sakakura M."/>
            <person name="Hadziselimovic A."/>
            <person name="Wang Z."/>
            <person name="Schey K.L."/>
            <person name="Sanders C.R."/>
        </authorList>
    </citation>
    <scope>STRUCTURE BY NMR OF WILD TYPE AND MUTANT PRO-16</scope>
    <scope>SUBCELLULAR LOCATION</scope>
    <scope>TOPOLOGY</scope>
</reference>
<reference key="11">
    <citation type="journal article" date="1993" name="Nat. Genet.">
        <title>Evidence for a recessive PMP22 point mutation in Charcot-Marie-Tooth disease type 1A.</title>
        <authorList>
            <person name="Roa B.B."/>
            <person name="Garcia C.A."/>
            <person name="Pentao L."/>
            <person name="Killian J.M."/>
            <person name="Trask B.J."/>
            <person name="Suter U."/>
            <person name="Snipes G.J."/>
            <person name="Ortiz-Lopez R."/>
            <person name="Shooter E.M."/>
            <person name="Patel P.I."/>
            <person name="Lupski J.R."/>
        </authorList>
    </citation>
    <scope>VARIANTS DSS LYS-69 AND LEU-72</scope>
    <scope>VARIANTS CMT1A CYS-79 AND MET-118</scope>
</reference>
<reference key="12">
    <citation type="journal article" date="1993" name="Nat. Genet.">
        <title>Dejerine-Sottas syndrome associated with point mutation in the peripheral myelin protein 22 (PMP22) gene.</title>
        <authorList>
            <person name="Roa B.B."/>
            <person name="Dyck P.J."/>
            <person name="Marks H.G."/>
            <person name="Chance P.F."/>
            <person name="Lupski J.R."/>
        </authorList>
    </citation>
    <scope>VARIANTS DSS LYS-69 AND LEU-72</scope>
</reference>
<reference key="13">
    <citation type="journal article" date="1993" name="N. Engl. J. Med.">
        <title>Charcot-Marie-Tooth disease type 1A. Association with a spontaneous point mutation in the PMP22 gene.</title>
        <authorList>
            <person name="Roa B.B."/>
            <person name="Garcia C.A."/>
            <person name="Suter U."/>
            <person name="Kulpa D.A."/>
            <person name="Wise C.A."/>
            <person name="Mueller J."/>
            <person name="Welcher A.A."/>
            <person name="Snipes G.J."/>
            <person name="Shooter E.M."/>
            <person name="Patel P.I."/>
            <person name="Lupski J.R."/>
        </authorList>
    </citation>
    <scope>VARIANT CMT1A CYS-79</scope>
</reference>
<reference key="14">
    <citation type="journal article" date="1995" name="Acta Neuropathol.">
        <title>Charcot-Marie-Tooth disease type 1A: morphological phenotype of the 17p duplication versus PMP22 point mutations.</title>
        <authorList>
            <person name="Gabreeels-Festen A.A.W.M."/>
            <person name="Bolhuis P.A."/>
            <person name="Hoogendijk J.E."/>
            <person name="Valentijn L.J."/>
            <person name="Eshuis E.J."/>
            <person name="Gabreeels F.J.M."/>
        </authorList>
    </citation>
    <scope>VARIANT CMT1A ARG-105</scope>
</reference>
<reference key="15">
    <citation type="journal article" date="1995" name="Hum. Mutat.">
        <title>Dejerine-Sottas neuropathy is associated with a de novo PMP22 mutation.</title>
        <authorList>
            <person name="Valentijn L.J."/>
            <person name="Ouvrier R.A."/>
            <person name="van den Bosch N.H.A."/>
            <person name="Bolhuis P.A."/>
            <person name="Baas F."/>
            <person name="Nicholson G.A."/>
        </authorList>
    </citation>
    <scope>VARIANT DSS GLN-12</scope>
</reference>
<reference key="16">
    <citation type="journal article" date="1995" name="Neurology">
        <title>Dejerine-Sottas disease with de novo dominant point mutation of the PMP22 gene.</title>
        <authorList>
            <person name="Ionasescu V.V."/>
            <person name="Ionasescu R."/>
            <person name="Searby C.C."/>
            <person name="Neahring R."/>
        </authorList>
    </citation>
    <scope>VARIANT DSS LEU-72</scope>
</reference>
<reference key="17">
    <citation type="journal article" date="1995" name="Rinsho Shinkeigaku">
        <title>A case of hereditary motor and sensory neuropathy type I with a new type of peripheral myelin protein (PMP)-22 mutation.</title>
        <authorList>
            <person name="Ohnishi A."/>
            <person name="Yoshimura T."/>
            <person name="Kanehisa Y."/>
            <person name="Fukushima Y."/>
        </authorList>
    </citation>
    <scope>VARIANT CMT1A ARG-93</scope>
</reference>
<reference key="18">
    <citation type="journal article" date="1996" name="Hum. Genet.">
        <title>A new point mutation affecting the fourth transmembrane domain of PMP22 results in severe de novo Charcot-Marie-Tooth disease.</title>
        <authorList>
            <person name="Navon R."/>
            <person name="Seifried B."/>
            <person name="Gal-On N.S."/>
            <person name="Sadeh M."/>
        </authorList>
    </citation>
    <scope>VARIANT CMT1A ARG-147</scope>
</reference>
<reference key="19">
    <citation type="journal article" date="1996" name="J. Med. Genet.">
        <title>Dejerine-Sottas disease with sensorineural hearing loss, nystagmus, and peripheral facial nerve weakness: de novo dominant point mutation of the PMP22 gene.</title>
        <authorList>
            <person name="Ionasescu V.V."/>
            <person name="Searby C."/>
            <person name="Greenberg S.A."/>
        </authorList>
    </citation>
    <scope>VARIANT DSS LEU-72</scope>
</reference>
<reference key="20">
    <citation type="journal article" date="1997" name="Brain">
        <title>Hereditary demyelinating neuropathy of infancy. A genetically complex syndrome.</title>
        <authorList>
            <person name="Tyson J."/>
            <person name="Ellis D."/>
            <person name="Fairbrother U."/>
            <person name="King R.H."/>
            <person name="Muntoni F."/>
            <person name="Jacobs J."/>
            <person name="Malcolm S."/>
            <person name="Harding A.E."/>
            <person name="Thomas P.K."/>
        </authorList>
    </citation>
    <scope>VARIANTS DSS TRP-72; ILE-76 AND PRO-80</scope>
</reference>
<reference key="21">
    <citation type="journal article" date="1997" name="Hum. Genet.">
        <title>Mutational analysis of the MPZ, PMP22 and Cx32 genes in patients of Spanish ancestry with Charcot-Marie-Tooth disease and hereditary neuropathy with liability to pressure palsies.</title>
        <authorList>
            <person name="Bort S."/>
            <person name="Nelis E."/>
            <person name="Timmerman V."/>
            <person name="Sevilla T."/>
            <person name="Cruz-Martinez A."/>
            <person name="Martinez F."/>
            <person name="Millan J.M."/>
            <person name="Arpa J."/>
            <person name="Vilchez J.J."/>
            <person name="Prieto F."/>
            <person name="van Broeckhoven C."/>
            <person name="Palau F."/>
        </authorList>
    </citation>
    <scope>VARIANT DSS ARG-100</scope>
</reference>
<reference key="22">
    <citation type="journal article" date="1997" name="Muscle Nerve">
        <title>Dejerine-Sottas neuropathy in mother and son with same point mutation of PMP22 gene.</title>
        <authorList>
            <person name="Ionasescu V.V."/>
            <person name="Searby C.C."/>
            <person name="Ionasescu R."/>
            <person name="Chatkupt S."/>
            <person name="Patel N."/>
            <person name="Koenigsberger R."/>
        </authorList>
    </citation>
    <scope>VARIANT DSS ASP-150</scope>
</reference>
<reference key="23">
    <citation type="journal article" date="1997" name="Nat. Genet.">
        <title>PMP22 Thr(118)Met: recessive CMT1 mutation or polymorphism?</title>
        <authorList>
            <person name="Nelis E."/>
            <person name="Holmberg B."/>
            <person name="Adolfsson R."/>
            <person name="Holmgren G."/>
            <person name="van Broeckhoven C."/>
        </authorList>
    </citation>
    <scope>VARIANT MET-118</scope>
</reference>
<reference key="24">
    <citation type="journal article" date="1997" name="Neurology">
        <title>A novel point mutation in the peripheral myelin protein 22 (PMP22) gene associated with Charcot-Marie-Tooth disease type 1A.</title>
        <authorList>
            <person name="Marrosu M.G."/>
            <person name="Vaccargiu S."/>
            <person name="Marrosu G."/>
            <person name="Vannelli A."/>
            <person name="Cianchetti C."/>
            <person name="Muntoni F."/>
        </authorList>
    </citation>
    <scope>VARIANT CMT1A VAL-107</scope>
</reference>
<reference key="25">
    <citation type="journal article" date="1998" name="Ann. Neurol.">
        <title>Dejerine-Sottas neuropathy and PMP22 point mutations: a new base pair substitution and a possible 'hot spot' on Ser72.</title>
        <authorList>
            <person name="Marques W. Jr."/>
            <person name="Thomas P.K."/>
            <person name="Sweeney M.G."/>
            <person name="Carr L."/>
            <person name="Wood N.W."/>
        </authorList>
    </citation>
    <scope>VARIANTS DSS LEU-72 AND GLU-100</scope>
</reference>
<reference key="26">
    <citation type="journal article" date="1998" name="Hum. Genet.">
        <title>Novel mutations of the peripheral myelin protein 22 gene in two pedigrees with Dejerine-Sottas disease.</title>
        <authorList>
            <person name="Ikegami T."/>
            <person name="Ikeda H."/>
            <person name="Aoyama M."/>
            <person name="Matsuki T."/>
            <person name="Imota T."/>
            <person name="Fukuuchi Y."/>
            <person name="Amano T."/>
            <person name="Toyoshima I."/>
            <person name="Ishihara Y."/>
            <person name="Endoh H."/>
            <person name="Hayasaka K."/>
        </authorList>
    </citation>
    <scope>VARIANT DSS CYS-150</scope>
</reference>
<reference key="27">
    <citation type="journal article" date="1998" name="Hum. Mutat. Suppl.">
        <title>Dejerine-Sottas neuropathy associated with de novo S79P mutation of the peripheral myelin protein 22 (PMP22) gene.</title>
        <authorList>
            <person name="Bort S."/>
            <person name="Sevilla T."/>
            <person name="Garcia-Planells J."/>
            <person name="Blesa D."/>
            <person name="Paricio N."/>
            <person name="Vilchez J.J."/>
            <person name="Prieto F."/>
            <person name="Palau F."/>
        </authorList>
    </citation>
    <scope>VARIANT DSS PRO-79</scope>
</reference>
<reference key="28">
    <citation type="journal article" date="1998" name="Hum. Mutat. Suppl.">
        <title>Mutation analysis in Charcot-Marie-Tooth disease type 1 (CMT1).</title>
        <authorList>
            <person name="Sorour E."/>
            <person name="Upadhyaya M."/>
        </authorList>
    </citation>
    <scope>VARIANT MET-118</scope>
</reference>
<reference key="29">
    <citation type="journal article" date="1998" name="Hum. Mutat.">
        <title>Spectrum of mutations in Finnish patients with Charcot-Marie-Tooth disease and related neuropathies.</title>
        <authorList>
            <person name="Silander K."/>
            <person name="Meretoja P."/>
            <person name="Juvonen V."/>
            <person name="Ignatius J."/>
            <person name="Pihko H."/>
            <person name="Saarinen A."/>
            <person name="Wallden T."/>
            <person name="Herrgaard E."/>
            <person name="Aula P."/>
            <person name="Savontaus M.-L."/>
        </authorList>
    </citation>
    <scope>VARIANT DSS PHE-84 DEL</scope>
</reference>
<reference key="30">
    <citation type="journal article" date="1998" name="Neurology">
        <title>A novel PMP22 point mutation causing HNPP phenotype: studies on nerve xenografts.</title>
        <authorList>
            <person name="Sahenk Z."/>
            <person name="Chen L."/>
            <person name="Freimer M."/>
        </authorList>
    </citation>
    <scope>VARIANT HNPP MET-30</scope>
</reference>
<reference key="31">
    <citation type="journal article" date="1999" name="Am. J. Hum. Genet.">
        <title>A unique point mutation in the PMP22 gene is associated with Charcot-Marie-Tooth disease and deafness.</title>
        <authorList>
            <person name="Kovach M.J."/>
            <person name="Lin J.-P."/>
            <person name="Boyadjiev S."/>
            <person name="Campbell K."/>
            <person name="Mazzeo L."/>
            <person name="Herman K."/>
            <person name="Rimer L.A."/>
            <person name="Frank W."/>
            <person name="Llewellyn B."/>
            <person name="Wang Jabs E."/>
            <person name="Gelber D."/>
            <person name="Kimonis V.E."/>
        </authorList>
    </citation>
    <scope>VARIANT CMT1E PRO-67</scope>
</reference>
<reference key="32">
    <citation type="journal article" date="1999" name="Ann. Neurol.">
        <title>Recessive inheritance of a new point mutation of the PMP22 gene in Dejerine-Sottas disease.</title>
        <authorList>
            <person name="Parman Y."/>
            <person name="Plante-Bordeneuve V."/>
            <person name="Guiochon-Mantel A."/>
            <person name="Eraksoy M."/>
            <person name="Said G."/>
        </authorList>
    </citation>
    <scope>VARIANT DSS TRP-157</scope>
    <source>
        <tissue>Peripheral blood</tissue>
    </source>
</reference>
<reference key="33">
    <citation type="journal article" date="1999" name="Neurology">
        <title>Myelin uncompaction in Charcot-Marie-Tooth neuropathy type 1A with a point mutation of peripheral myelin protein-22.</title>
        <authorList>
            <person name="Fabrizi G.M."/>
            <person name="Cavallaro T."/>
            <person name="Taioli F."/>
            <person name="Orrico D."/>
            <person name="Morbin M."/>
            <person name="Simonati A."/>
            <person name="Rizzuto N."/>
        </authorList>
    </citation>
    <scope>VARIANT CMT1A VAL-37</scope>
</reference>
<reference key="34">
    <citation type="journal article" date="2000" name="Acta Neuropathol.">
        <title>Dejerine-Sottas disease with a novel de novo dominant mutation, Ser 149 Arg, of the peripheral myelin protein 22.</title>
        <authorList>
            <person name="Ohnishi A."/>
            <person name="Yamamoto T."/>
            <person name="Izawa K."/>
            <person name="Yamamori S."/>
            <person name="Takahashi K."/>
            <person name="Mega H."/>
            <person name="Jinnai K."/>
        </authorList>
    </citation>
    <scope>VARIANT DSS ARG-149</scope>
</reference>
<reference key="35">
    <citation type="journal article" date="2000" name="Ann. Neurol.">
        <title>Hemizygous mutation of the peripheral myelin protein 22 gene associated with Charcot-Marie-Tooth disease type 1.</title>
        <authorList>
            <person name="Numakura C."/>
            <person name="Lin C."/>
            <person name="Oka N."/>
            <person name="Akiguchi I."/>
            <person name="Hayasaka K."/>
        </authorList>
    </citation>
    <scope>VARIANT GLY-157</scope>
    <source>
        <tissue>Peripheral blood leukocyte</tissue>
    </source>
</reference>
<reference key="36">
    <citation type="journal article" date="2000" name="Clin. Genet.">
        <title>Mutational analysis and genotype/phenotype correlation in Turkish Charcot-Marie-Tooth type 1 and HNPP patients.</title>
        <authorList>
            <person name="Bissar-Tadmouri N."/>
            <person name="Parman Y."/>
            <person name="Boutrand L."/>
            <person name="Deymeer F."/>
            <person name="Serdaroglu P."/>
            <person name="Vandenberghe A."/>
            <person name="Battaloglu E."/>
        </authorList>
    </citation>
    <scope>VARIANT CMT1A LEU-72</scope>
</reference>
<reference key="37">
    <citation type="journal article" date="2000" name="Hum. Mutat.">
        <title>Screening for mutations in the peripheral myelin genes PMP22, MPZ and Cx32 (GJB1) in Russian Charcot-Marie-Tooth neuropathy patients.</title>
        <authorList>
            <person name="Mersiyanova I.V."/>
            <person name="Ismailov S.M."/>
            <person name="Polyakov A.V."/>
            <person name="Dadali E.L."/>
            <person name="Fedotov V.P."/>
            <person name="Nelis E."/>
            <person name="Loefgren A."/>
            <person name="Timmerman V."/>
            <person name="Van Broeckhoven C."/>
            <person name="Evgrafov O.V."/>
        </authorList>
    </citation>
    <scope>VARIANTS CMT1A 25-VAL-SER-26 DEL AND ARG-147</scope>
    <scope>VARIANT MET-118</scope>
</reference>
<reference key="38">
    <citation type="journal article" date="2001" name="Hum. Mutat.">
        <title>Charcot-Marie-Tooth disease type I and related demyelinating neuropathies: mutation analysis in a large cohort of Italian families.</title>
        <authorList>
            <person name="Mostacciuolo M.L."/>
            <person name="Righetti E."/>
            <person name="Zortea M."/>
            <person name="Bosello V."/>
            <person name="Schiavon F."/>
            <person name="Vallo L."/>
            <person name="Merlini L."/>
            <person name="Siciliano G."/>
            <person name="Fabrizi G.M."/>
            <person name="Rizzuto N."/>
            <person name="Milani M."/>
            <person name="Baratta S."/>
            <person name="Taroni F."/>
        </authorList>
    </citation>
    <scope>VARIANTS DSS LEU-72 AND ARG-109</scope>
</reference>
<reference key="39">
    <citation type="journal article" date="2002" name="Am. J. Med. Genet.">
        <title>Family with inflammatory demyelinating polyneuropathy and the HNPP 17p12 deletion.</title>
        <authorList>
            <person name="Korn-Lubetzki I."/>
            <person name="Argov Z."/>
            <person name="Raas-Rothschild A."/>
            <person name="Wirguin I."/>
            <person name="Steiner I."/>
        </authorList>
    </citation>
    <scope>INVOLVEMENT IN IDP</scope>
</reference>
<reference key="40">
    <citation type="journal article" date="2002" name="Ann. Neurol.">
        <title>Charcot-Marie-Tooth disease and related neuropathies: mutation distribution and genotype-phenotype correlation.</title>
        <authorList>
            <person name="Boerkoel C.F."/>
            <person name="Takashima H."/>
            <person name="Garcia C.A."/>
            <person name="Olney R.K."/>
            <person name="Johnson J."/>
            <person name="Berry K."/>
            <person name="Russo P."/>
            <person name="Kennedy S."/>
            <person name="Teebi A.S."/>
            <person name="Scavina M."/>
            <person name="Williams L.L."/>
            <person name="Mancias P."/>
            <person name="Butler I.J."/>
            <person name="Krajewski K."/>
            <person name="Shy M."/>
            <person name="Lupski J.R."/>
        </authorList>
    </citation>
    <scope>VARIANT CMT1E ARG-28</scope>
    <scope>VARIANT CMT1A/DSS PRO-71</scope>
</reference>
<reference key="41">
    <citation type="journal article" date="2002" name="Hum. Mutat.">
        <title>Molecular analysis in Japanese patients with Charcot-Marie-Tooth disease: DGGE analysis for PMP22, MPZ, and Cx32/GJB1 mutations.</title>
        <authorList>
            <person name="Numakura C."/>
            <person name="Lin C."/>
            <person name="Ikegami T."/>
            <person name="Guldberg P."/>
            <person name="Hayasaka K."/>
        </authorList>
    </citation>
    <scope>VARIANT CMT1A LEU-72</scope>
</reference>
<reference key="42">
    <citation type="journal article" date="2002" name="J. Anat.">
        <title>Dejerine-Sottas syndrome grown to maturity: overview of genetic and morphological heterogeneity and follow-up of 25 patients.</title>
        <authorList>
            <person name="Gabreeels-Festen A.A.W.M."/>
        </authorList>
    </citation>
    <scope>VARIANTS DSS PRO-16; ARG-80 AND ARG-105</scope>
</reference>
<reference key="43">
    <citation type="journal article" date="2003" name="Hum. Mutat.">
        <title>Novel mutations in the Charcot-Marie-Tooth disease genes PMP22, MPZ, and GJB1.</title>
        <authorList>
            <person name="Huehne K."/>
            <person name="Benes V."/>
            <person name="Thiel C."/>
            <person name="Kraus C."/>
            <person name="Kress W."/>
            <person name="Hoeltzenbein M."/>
            <person name="Ploner C.J."/>
            <person name="Kotzian J."/>
            <person name="Reis A."/>
            <person name="Rott H.D."/>
            <person name="Rautenstrauss B.W."/>
        </authorList>
    </citation>
    <scope>VARIANT CMT1A PHE-65</scope>
</reference>
<reference key="44">
    <citation type="journal article" date="2003" name="Neurology">
        <title>Deafness and CMT disease associated with a novel four amino acid deletion in the PMP22 gene.</title>
        <authorList>
            <person name="Sambuughin N."/>
            <person name="de Bantel A."/>
            <person name="McWilliams S."/>
            <person name="Sivakumar K."/>
        </authorList>
    </citation>
    <scope>VARIANT CMT1E 115-ALA--THR-118 DEL</scope>
</reference>
<reference key="45">
    <citation type="journal article" date="2003" name="Neurology">
        <title>HNPP due to a novel missense mutation of the PMP22 gene.</title>
        <authorList>
            <person name="Nodera H."/>
            <person name="Nishimura M."/>
            <person name="Logigian E.L."/>
            <person name="Herrmann D.N."/>
            <person name="Kaji R."/>
        </authorList>
    </citation>
    <scope>VARIANT HNPP THR-67</scope>
</reference>
<reference key="46">
    <citation type="journal article" date="2004" name="Neurogenetics">
        <title>A novel PMP22 mutation Ser22Phe in a family with hereditary neuropathy with liability to pressure palsies and CMT1A phenotypes.</title>
        <authorList>
            <person name="Kleopa K.A."/>
            <person name="Georgiou D.-M."/>
            <person name="Nicolaou P."/>
            <person name="Koutsou P."/>
            <person name="Papathanasiou E."/>
            <person name="Kyriakides T."/>
            <person name="Christodoulou K."/>
        </authorList>
    </citation>
    <scope>VARIANT HNPP/CMT1A PHE-22</scope>
</reference>
<reference key="47">
    <citation type="journal article" date="2004" name="Neuromuscul. Disord.">
        <title>A novel point mutation in PMP22 gene associated with a familial case of Charcot-Marie-Tooth disease type 1A with sensorineural deafness.</title>
        <authorList>
            <person name="Joo I.S."/>
            <person name="Ki C.S."/>
            <person name="Joo S.Y."/>
            <person name="Huh K."/>
            <person name="Kim J.W."/>
        </authorList>
    </citation>
    <scope>VARIANT CMT1E ARG-23</scope>
</reference>
<reference key="48">
    <citation type="journal article" date="2006" name="Ann. Neurol.">
        <title>T118M PMP22 mutation causes partial loss of function and HNPP-like neuropathy.</title>
        <authorList>
            <person name="Shy M.E."/>
            <person name="Scavina M.T."/>
            <person name="Clark A."/>
            <person name="Krajewski K.M."/>
            <person name="Li J."/>
            <person name="Kamholz J."/>
            <person name="Kolodny E."/>
            <person name="Szigeti K."/>
            <person name="Fischer R.A."/>
            <person name="Saifi G.M."/>
            <person name="Scherer S.S."/>
            <person name="Lupski J.R."/>
        </authorList>
    </citation>
    <scope>VARIANT CNT1A MET-118</scope>
</reference>
<name>PMP22_HUMAN</name>
<sequence length="160" mass="17891">MLLLLLSIIVLHVAVLVLLFVSTIVSQWIVGNGHATDLWQNCSTSSSGNVHHCFSSSPNEWLQSVQATMILSIIFSILSLFLFFCQLFTLTKGGRFYITGIFQILAGLCVMSAAAIYTVRHPEWHLNSDYSYGFAYILAWVAFPLALLSGVIYVILRKRE</sequence>
<accession>Q01453</accession>
<accession>Q8WV01</accession>
<comment type="function">
    <text>Might be involved in growth regulation, and in myelinization in the peripheral nervous system.</text>
</comment>
<comment type="interaction">
    <interactant intactId="EBI-2845982">
        <id>Q01453</id>
    </interactant>
    <interactant intactId="EBI-11976321">
        <id>O95236-2</id>
        <label>APOL3</label>
    </interactant>
    <organismsDiffer>false</organismsDiffer>
    <experiments>3</experiments>
</comment>
<comment type="interaction">
    <interactant intactId="EBI-2845982">
        <id>Q01453</id>
    </interactant>
    <interactant intactId="EBI-12701138">
        <id>P41181</id>
        <label>AQP2</label>
    </interactant>
    <organismsDiffer>false</organismsDiffer>
    <experiments>3</experiments>
</comment>
<comment type="interaction">
    <interactant intactId="EBI-2845982">
        <id>Q01453</id>
    </interactant>
    <interactant intactId="EBI-11343438">
        <id>Q3SXY8</id>
        <label>ARL13B</label>
    </interactant>
    <organismsDiffer>false</organismsDiffer>
    <experiments>3</experiments>
</comment>
<comment type="interaction">
    <interactant intactId="EBI-2845982">
        <id>Q01453</id>
    </interactant>
    <interactant intactId="EBI-12808270">
        <id>P07307-3</id>
        <label>ASGR2</label>
    </interactant>
    <organismsDiffer>false</organismsDiffer>
    <experiments>3</experiments>
</comment>
<comment type="interaction">
    <interactant intactId="EBI-2845982">
        <id>Q01453</id>
    </interactant>
    <interactant intactId="EBI-2512037">
        <id>O75787</id>
        <label>ATP6AP2</label>
    </interactant>
    <organismsDiffer>false</organismsDiffer>
    <experiments>3</experiments>
</comment>
<comment type="interaction">
    <interactant intactId="EBI-2845982">
        <id>Q01453</id>
    </interactant>
    <interactant intactId="EBI-18041102">
        <id>Q6UWD8</id>
        <label>C16orf54</label>
    </interactant>
    <organismsDiffer>false</organismsDiffer>
    <experiments>3</experiments>
</comment>
<comment type="interaction">
    <interactant intactId="EBI-2845982">
        <id>Q01453</id>
    </interactant>
    <interactant intactId="EBI-3862428">
        <id>P09693</id>
        <label>CD3G</label>
    </interactant>
    <organismsDiffer>false</organismsDiffer>
    <experiments>3</experiments>
</comment>
<comment type="interaction">
    <interactant intactId="EBI-2845982">
        <id>Q01453</id>
    </interactant>
    <interactant intactId="EBI-6657396">
        <id>P19397</id>
        <label>CD53</label>
    </interactant>
    <organismsDiffer>false</organismsDiffer>
    <experiments>3</experiments>
</comment>
<comment type="interaction">
    <interactant intactId="EBI-2845982">
        <id>Q01453</id>
    </interactant>
    <interactant intactId="EBI-2836595">
        <id>Q07108</id>
        <label>CD69</label>
    </interactant>
    <organismsDiffer>false</organismsDiffer>
    <experiments>3</experiments>
</comment>
<comment type="interaction">
    <interactant intactId="EBI-2845982">
        <id>Q01453</id>
    </interactant>
    <interactant intactId="EBI-12851752">
        <id>P40198</id>
        <label>CEACAM3</label>
    </interactant>
    <organismsDiffer>false</organismsDiffer>
    <experiments>3</experiments>
</comment>
<comment type="interaction">
    <interactant intactId="EBI-2845982">
        <id>Q01453</id>
    </interactant>
    <interactant intactId="EBI-16354902">
        <id>P56856</id>
        <label>CLDN18</label>
    </interactant>
    <organismsDiffer>false</organismsDiffer>
    <experiments>3</experiments>
</comment>
<comment type="interaction">
    <interactant intactId="EBI-2845982">
        <id>Q01453</id>
    </interactant>
    <interactant intactId="EBI-18400628">
        <id>O00501</id>
        <label>CLDN5</label>
    </interactant>
    <organismsDiffer>false</organismsDiffer>
    <experiments>3</experiments>
</comment>
<comment type="interaction">
    <interactant intactId="EBI-2845982">
        <id>Q01453</id>
    </interactant>
    <interactant intactId="EBI-12955011">
        <id>P56747</id>
        <label>CLDN6</label>
    </interactant>
    <organismsDiffer>false</organismsDiffer>
    <experiments>3</experiments>
</comment>
<comment type="interaction">
    <interactant intactId="EBI-2845982">
        <id>Q01453</id>
    </interactant>
    <interactant intactId="EBI-12811991">
        <id>Q2HXU8-2</id>
        <label>CLEC12B</label>
    </interactant>
    <organismsDiffer>false</organismsDiffer>
    <experiments>3</experiments>
</comment>
<comment type="interaction">
    <interactant intactId="EBI-2845982">
        <id>Q01453</id>
    </interactant>
    <interactant intactId="EBI-17710733">
        <id>Q86T13</id>
        <label>CLEC14A</label>
    </interactant>
    <organismsDiffer>false</organismsDiffer>
    <experiments>3</experiments>
</comment>
<comment type="interaction">
    <interactant intactId="EBI-2845982">
        <id>Q01453</id>
    </interactant>
    <interactant intactId="EBI-625022">
        <id>O43889-2</id>
        <label>CREB3</label>
    </interactant>
    <organismsDiffer>false</organismsDiffer>
    <experiments>3</experiments>
</comment>
<comment type="interaction">
    <interactant intactId="EBI-2845982">
        <id>Q01453</id>
    </interactant>
    <interactant intactId="EBI-6942903">
        <id>Q96BA8</id>
        <label>CREB3L1</label>
    </interactant>
    <organismsDiffer>false</organismsDiffer>
    <experiments>3</experiments>
</comment>
<comment type="interaction">
    <interactant intactId="EBI-2845982">
        <id>Q01453</id>
    </interactant>
    <interactant intactId="EBI-3915253">
        <id>Q15125</id>
        <label>EBP</label>
    </interactant>
    <organismsDiffer>false</organismsDiffer>
    <experiments>3</experiments>
</comment>
<comment type="interaction">
    <interactant intactId="EBI-2845982">
        <id>Q01453</id>
    </interactant>
    <interactant intactId="EBI-529425">
        <id>Q92838</id>
        <label>EDA</label>
    </interactant>
    <organismsDiffer>false</organismsDiffer>
    <experiments>3</experiments>
</comment>
<comment type="interaction">
    <interactant intactId="EBI-2845982">
        <id>Q01453</id>
    </interactant>
    <interactant intactId="EBI-4319440">
        <id>P54849</id>
        <label>EMP1</label>
    </interactant>
    <organismsDiffer>false</organismsDiffer>
    <experiments>3</experiments>
</comment>
<comment type="interaction">
    <interactant intactId="EBI-2845982">
        <id>Q01453</id>
    </interactant>
    <interactant intactId="EBI-781551">
        <id>Q9Y282</id>
        <label>ERGIC3</label>
    </interactant>
    <organismsDiffer>false</organismsDiffer>
    <experiments>3</experiments>
</comment>
<comment type="interaction">
    <interactant intactId="EBI-2845982">
        <id>Q01453</id>
    </interactant>
    <interactant intactId="EBI-17973325">
        <id>P60508</id>
        <label>ERVFRD-1</label>
    </interactant>
    <organismsDiffer>false</organismsDiffer>
    <experiments>3</experiments>
</comment>
<comment type="interaction">
    <interactant intactId="EBI-2845982">
        <id>Q01453</id>
    </interactant>
    <interactant intactId="EBI-18304435">
        <id>Q5JX71</id>
        <label>FAM209A</label>
    </interactant>
    <organismsDiffer>false</organismsDiffer>
    <experiments>3</experiments>
</comment>
<comment type="interaction">
    <interactant intactId="EBI-2845982">
        <id>Q01453</id>
    </interactant>
    <interactant intactId="EBI-2833934">
        <id>P55899</id>
        <label>FCGRT</label>
    </interactant>
    <organismsDiffer>false</organismsDiffer>
    <experiments>3</experiments>
</comment>
<comment type="interaction">
    <interactant intactId="EBI-2845982">
        <id>Q01453</id>
    </interactant>
    <interactant intactId="EBI-2833872">
        <id>O15552</id>
        <label>FFAR2</label>
    </interactant>
    <organismsDiffer>false</organismsDiffer>
    <experiments>3</experiments>
</comment>
<comment type="interaction">
    <interactant intactId="EBI-2845982">
        <id>Q01453</id>
    </interactant>
    <interactant intactId="EBI-17458373">
        <id>P48165</id>
        <label>GJA8</label>
    </interactant>
    <organismsDiffer>false</organismsDiffer>
    <experiments>3</experiments>
</comment>
<comment type="interaction">
    <interactant intactId="EBI-2845982">
        <id>Q01453</id>
    </interactant>
    <interactant intactId="EBI-18076404">
        <id>O15529</id>
        <label>GPR42</label>
    </interactant>
    <organismsDiffer>false</organismsDiffer>
    <experiments>3</experiments>
</comment>
<comment type="interaction">
    <interactant intactId="EBI-2845982">
        <id>Q01453</id>
    </interactant>
    <interactant intactId="EBI-12808020">
        <id>Q9BZJ8</id>
        <label>GPR61</label>
    </interactant>
    <organismsDiffer>false</organismsDiffer>
    <experiments>3</experiments>
</comment>
<comment type="interaction">
    <interactant intactId="EBI-2845982">
        <id>Q01453</id>
    </interactant>
    <interactant intactId="EBI-13067820">
        <id>Q9NZD1</id>
        <label>GPRC5D</label>
    </interactant>
    <organismsDiffer>false</organismsDiffer>
    <experiments>3</experiments>
</comment>
<comment type="interaction">
    <interactant intactId="EBI-2845982">
        <id>Q01453</id>
    </interactant>
    <interactant intactId="EBI-3905457">
        <id>P38484</id>
        <label>IFNGR2</label>
    </interactant>
    <organismsDiffer>false</organismsDiffer>
    <experiments>3</experiments>
</comment>
<comment type="interaction">
    <interactant intactId="EBI-2845982">
        <id>Q01453</id>
    </interactant>
    <interactant intactId="EBI-1055254">
        <id>Q8WXH2</id>
        <label>JPH3</label>
    </interactant>
    <organismsDiffer>false</organismsDiffer>
    <experiments>3</experiments>
</comment>
<comment type="interaction">
    <interactant intactId="EBI-2845982">
        <id>Q01453</id>
    </interactant>
    <interactant intactId="EBI-12017638">
        <id>P48051</id>
        <label>KCNJ6</label>
    </interactant>
    <organismsDiffer>false</organismsDiffer>
    <experiments>3</experiments>
</comment>
<comment type="interaction">
    <interactant intactId="EBI-2845982">
        <id>Q01453</id>
    </interactant>
    <interactant intactId="EBI-2924473">
        <id>O15554</id>
        <label>KCNN4</label>
    </interactant>
    <organismsDiffer>false</organismsDiffer>
    <experiments>3</experiments>
</comment>
<comment type="interaction">
    <interactant intactId="EBI-2845982">
        <id>Q01453</id>
    </interactant>
    <interactant intactId="EBI-9018187">
        <id>P26715</id>
        <label>KLRC1</label>
    </interactant>
    <organismsDiffer>false</organismsDiffer>
    <experiments>6</experiments>
</comment>
<comment type="interaction">
    <interactant intactId="EBI-2845982">
        <id>Q01453</id>
    </interactant>
    <interactant intactId="EBI-721391">
        <id>Q9GZW8</id>
        <label>MS4A7</label>
    </interactant>
    <organismsDiffer>false</organismsDiffer>
    <experiments>3</experiments>
</comment>
<comment type="interaction">
    <interactant intactId="EBI-2845982">
        <id>Q01453</id>
    </interactant>
    <interactant intactId="EBI-12807478">
        <id>P35372-10</id>
        <label>OPRM1</label>
    </interactant>
    <organismsDiffer>false</organismsDiffer>
    <experiments>3</experiments>
</comment>
<comment type="interaction">
    <interactant intactId="EBI-2845982">
        <id>Q01453</id>
    </interactant>
    <interactant intactId="EBI-716063">
        <id>Q13113</id>
        <label>PDZK1IP1</label>
    </interactant>
    <organismsDiffer>false</organismsDiffer>
    <experiments>3</experiments>
</comment>
<comment type="interaction">
    <interactant intactId="EBI-2845982">
        <id>Q01453</id>
    </interactant>
    <interactant intactId="EBI-1050125">
        <id>O15173</id>
        <label>PGRMC2</label>
    </interactant>
    <organismsDiffer>false</organismsDiffer>
    <experiments>3</experiments>
</comment>
<comment type="interaction">
    <interactant intactId="EBI-2845982">
        <id>Q01453</id>
    </interactant>
    <interactant intactId="EBI-7545592">
        <id>Q9H6H4</id>
        <label>REEP4</label>
    </interactant>
    <organismsDiffer>false</organismsDiffer>
    <experiments>3</experiments>
</comment>
<comment type="interaction">
    <interactant intactId="EBI-2845982">
        <id>Q01453</id>
    </interactant>
    <interactant intactId="EBI-17247926">
        <id>Q9NY72</id>
        <label>SCN3B</label>
    </interactant>
    <organismsDiffer>false</organismsDiffer>
    <experiments>3</experiments>
</comment>
<comment type="interaction">
    <interactant intactId="EBI-2845982">
        <id>Q01453</id>
    </interactant>
    <interactant intactId="EBI-3913237">
        <id>P31431</id>
        <label>SDC4</label>
    </interactant>
    <organismsDiffer>false</organismsDiffer>
    <experiments>3</experiments>
</comment>
<comment type="interaction">
    <interactant intactId="EBI-2845982">
        <id>Q01453</id>
    </interactant>
    <interactant intactId="EBI-5663627">
        <id>Q16585</id>
        <label>SGCB</label>
    </interactant>
    <organismsDiffer>false</organismsDiffer>
    <experiments>3</experiments>
</comment>
<comment type="interaction">
    <interactant intactId="EBI-2845982">
        <id>Q01453</id>
    </interactant>
    <interactant intactId="EBI-18037857">
        <id>Q3SXP7</id>
        <label>SHISAL1</label>
    </interactant>
    <organismsDiffer>false</organismsDiffer>
    <experiments>3</experiments>
</comment>
<comment type="interaction">
    <interactant intactId="EBI-2845982">
        <id>Q01453</id>
    </interactant>
    <interactant intactId="EBI-17595455">
        <id>P54219-3</id>
        <label>SLC18A1</label>
    </interactant>
    <organismsDiffer>false</organismsDiffer>
    <experiments>3</experiments>
</comment>
<comment type="interaction">
    <interactant intactId="EBI-2845982">
        <id>Q01453</id>
    </interactant>
    <interactant intactId="EBI-9978441">
        <id>Q9H2H9</id>
        <label>SLC38A1</label>
    </interactant>
    <organismsDiffer>false</organismsDiffer>
    <experiments>3</experiments>
</comment>
<comment type="interaction">
    <interactant intactId="EBI-2845982">
        <id>Q01453</id>
    </interactant>
    <interactant intactId="EBI-741850">
        <id>Q9BZL3</id>
        <label>SMIM3</label>
    </interactant>
    <organismsDiffer>false</organismsDiffer>
    <experiments>9</experiments>
</comment>
<comment type="interaction">
    <interactant intactId="EBI-2845982">
        <id>Q01453</id>
    </interactant>
    <interactant intactId="EBI-17498703">
        <id>Q9HBV2</id>
        <label>SPACA1</label>
    </interactant>
    <organismsDiffer>false</organismsDiffer>
    <experiments>3</experiments>
</comment>
<comment type="interaction">
    <interactant intactId="EBI-2845982">
        <id>Q01453</id>
    </interactant>
    <interactant intactId="EBI-1211440">
        <id>P27105</id>
        <label>STOM</label>
    </interactant>
    <organismsDiffer>false</organismsDiffer>
    <experiments>3</experiments>
</comment>
<comment type="interaction">
    <interactant intactId="EBI-2845982">
        <id>Q01453</id>
    </interactant>
    <interactant intactId="EBI-8032987">
        <id>Q8N9I0</id>
        <label>SYT2</label>
    </interactant>
    <organismsDiffer>false</organismsDiffer>
    <experiments>3</experiments>
</comment>
<comment type="interaction">
    <interactant intactId="EBI-2845982">
        <id>Q01453</id>
    </interactant>
    <interactant intactId="EBI-12947623">
        <id>Q96MV1</id>
        <label>TLCD4</label>
    </interactant>
    <organismsDiffer>false</organismsDiffer>
    <experiments>3</experiments>
</comment>
<comment type="interaction">
    <interactant intactId="EBI-2845982">
        <id>Q01453</id>
    </interactant>
    <interactant intactId="EBI-13351685">
        <id>Q96CE8</id>
        <label>TM4SF18</label>
    </interactant>
    <organismsDiffer>false</organismsDiffer>
    <experiments>3</experiments>
</comment>
<comment type="interaction">
    <interactant intactId="EBI-2845982">
        <id>Q01453</id>
    </interactant>
    <interactant intactId="EBI-6448756">
        <id>Q96DZ7</id>
        <label>TM4SF19</label>
    </interactant>
    <organismsDiffer>false</organismsDiffer>
    <experiments>3</experiments>
</comment>
<comment type="interaction">
    <interactant intactId="EBI-2845982">
        <id>Q01453</id>
    </interactant>
    <interactant intactId="EBI-7238458">
        <id>Q8IV31</id>
        <label>TMEM139</label>
    </interactant>
    <organismsDiffer>false</organismsDiffer>
    <experiments>3</experiments>
</comment>
<comment type="interaction">
    <interactant intactId="EBI-2845982">
        <id>Q01453</id>
    </interactant>
    <interactant intactId="EBI-8638294">
        <id>Q9NUH8</id>
        <label>TMEM14B</label>
    </interactant>
    <organismsDiffer>false</organismsDiffer>
    <experiments>3</experiments>
</comment>
<comment type="interaction">
    <interactant intactId="EBI-2845982">
        <id>Q01453</id>
    </interactant>
    <interactant intactId="EBI-9527107">
        <id>Q3MIR4</id>
        <label>TMEM30B</label>
    </interactant>
    <organismsDiffer>false</organismsDiffer>
    <experiments>3</experiments>
</comment>
<comment type="interaction">
    <interactant intactId="EBI-2845982">
        <id>Q01453</id>
    </interactant>
    <interactant intactId="EBI-11742770">
        <id>Q96HE8</id>
        <label>TMEM80</label>
    </interactant>
    <organismsDiffer>false</organismsDiffer>
    <experiments>3</experiments>
</comment>
<comment type="interaction">
    <interactant intactId="EBI-2845982">
        <id>Q01453</id>
    </interactant>
    <interactant intactId="EBI-1051115">
        <id>Q9H3N1</id>
        <label>TMX1</label>
    </interactant>
    <organismsDiffer>false</organismsDiffer>
    <experiments>3</experiments>
</comment>
<comment type="interaction">
    <interactant intactId="EBI-2845982">
        <id>Q01453</id>
    </interactant>
    <interactant intactId="EBI-2466403">
        <id>O95859</id>
        <label>TSPAN12</label>
    </interactant>
    <organismsDiffer>false</organismsDiffer>
    <experiments>3</experiments>
</comment>
<comment type="subcellular location">
    <subcellularLocation>
        <location evidence="23">Cell membrane</location>
        <topology evidence="23">Multi-pass membrane protein</topology>
    </subcellularLocation>
</comment>
<comment type="PTM">
    <text evidence="2">Ubiquitinated by the DCX(DCAF13) E3 ubiquitin ligase complex, leading to its degradation.</text>
</comment>
<comment type="disease" evidence="6 9 10 12 14 16 19 21 26 28 29 30 31 35">
    <disease id="DI-00268">
        <name>Charcot-Marie-Tooth disease, demyelinating, type 1A</name>
        <acronym>CMT1A</acronym>
        <description>A dominant demyelinating form of Charcot-Marie-Tooth disease, a disorder of the peripheral nervous system, characterized by progressive weakness and atrophy, initially of the peroneal muscles and later of the distal muscles of the arms. Charcot-Marie-Tooth disease is classified in two main groups on the basis of electrophysiologic properties and histopathology: primary peripheral demyelinating neuropathies (designated CMT1 when they are dominantly inherited) and primary peripheral axonal neuropathies (CMT2). Demyelinating neuropathies are characterized by severely reduced nerve conduction velocities (less than 38 m/sec), segmental demyelination and remyelination with onion bulb formations on nerve biopsy, slowly progressive distal muscle atrophy and weakness, absent deep tendon reflexes, and hollow feet.</description>
        <dbReference type="MIM" id="118220"/>
    </disease>
    <text>The disease is caused by variants affecting the gene represented in this entry.</text>
</comment>
<comment type="disease" evidence="4 8 11 13 24 25 26 27 33 34 36 37 38 40 41 42 44">
    <disease id="DI-00387">
        <name>Dejerine-Sottas syndrome</name>
        <acronym>DSS</acronym>
        <description>A severe degenerating neuropathy of the demyelinating Charcot-Marie-Tooth disease category, with onset by age 2 years. Characterized by motor and sensory neuropathy with very slow nerve conduction velocities, increased cerebrospinal fluid protein concentrations, hypertrophic nerve changes, delayed age of walking as well as areflexia. There are both autosomal dominant and autosomal recessive forms of Dejerine-Sottas syndrome.</description>
        <dbReference type="MIM" id="145900"/>
    </disease>
    <text>The disease is caused by variants affecting the gene represented in this entry.</text>
</comment>
<comment type="disease" evidence="18 21 43">
    <disease id="DI-00546">
        <name>Hereditary neuropathy with liability to pressure palsies</name>
        <acronym>HNPP</acronym>
        <description>A neurologic disorder characterized by transient episodes of decreased perception or peripheral nerve palsies after slight traction, compression or minor traumas.</description>
        <dbReference type="MIM" id="162500"/>
    </disease>
    <text>The disease is caused by variants affecting the gene represented in this entry.</text>
</comment>
<comment type="disease" evidence="5 12 17 20">
    <disease id="DI-00272">
        <name>Charcot-Marie-Tooth disease, demyelinating, type 1E</name>
        <acronym>CMT1E</acronym>
        <description>An autosomal dominant form of Charcot-Marie-Tooth disease characterized by the association of sensorineural hearing loss with peripheral demyelinating neuropathy.</description>
        <dbReference type="MIM" id="118300"/>
    </disease>
    <text>The disease is caused by variants affecting the gene represented in this entry.</text>
</comment>
<comment type="disease" evidence="15">
    <disease id="DI-01824">
        <name>Inflammatory demyelinating polyneuropathy</name>
        <acronym>IDP</acronym>
        <description>Putative autoimmune disorder presenting in an acute (AIDP) or chronic form (CIDP). The acute form is also known as Guillain-Barre syndrome.</description>
        <dbReference type="MIM" id="139393"/>
    </disease>
    <text>The disease may be caused by variants affecting the gene represented in this entry.</text>
</comment>
<comment type="similarity">
    <text evidence="45">Belongs to the PMP-22/EMP/MP20 family.</text>
</comment>
<comment type="online information" name="Inherited peripheral neuropathies mutation db">
    <link uri="https://uantwerpen.vib.be/CMTMutations"/>
</comment>
<proteinExistence type="evidence at protein level"/>
<keyword id="KW-1003">Cell membrane</keyword>
<keyword id="KW-0144">Charcot-Marie-Tooth disease</keyword>
<keyword id="KW-0209">Deafness</keyword>
<keyword id="KW-0213">Dejerine-Sottas syndrome</keyword>
<keyword id="KW-0225">Disease variant</keyword>
<keyword id="KW-0325">Glycoprotein</keyword>
<keyword id="KW-0472">Membrane</keyword>
<keyword id="KW-0523">Neurodegeneration</keyword>
<keyword id="KW-0622">Neuropathy</keyword>
<keyword id="KW-1267">Proteomics identification</keyword>
<keyword id="KW-1185">Reference proteome</keyword>
<keyword id="KW-0812">Transmembrane</keyword>
<keyword id="KW-1133">Transmembrane helix</keyword>
<keyword id="KW-0832">Ubl conjugation</keyword>
<dbReference type="EMBL" id="M94048">
    <property type="protein sequence ID" value="AAA36457.1"/>
    <property type="molecule type" value="mRNA"/>
</dbReference>
<dbReference type="EMBL" id="D11428">
    <property type="protein sequence ID" value="BAA01995.1"/>
    <property type="molecule type" value="mRNA"/>
</dbReference>
<dbReference type="EMBL" id="S61788">
    <property type="protein sequence ID" value="AAB26811.1"/>
    <property type="molecule type" value="mRNA"/>
</dbReference>
<dbReference type="EMBL" id="L03203">
    <property type="protein sequence ID" value="AAA58495.1"/>
    <property type="molecule type" value="mRNA"/>
</dbReference>
<dbReference type="EMBL" id="BC019040">
    <property type="protein sequence ID" value="AAH19040.2"/>
    <property type="molecule type" value="mRNA"/>
</dbReference>
<dbReference type="EMBL" id="X65968">
    <property type="protein sequence ID" value="CAA46781.1"/>
    <property type="molecule type" value="mRNA"/>
</dbReference>
<dbReference type="CCDS" id="CCDS11168.1"/>
<dbReference type="PIR" id="JN0503">
    <property type="entry name" value="JN0503"/>
</dbReference>
<dbReference type="RefSeq" id="NP_000295.1">
    <property type="nucleotide sequence ID" value="NM_000304.4"/>
</dbReference>
<dbReference type="RefSeq" id="NP_001268384.1">
    <property type="nucleotide sequence ID" value="NM_001281455.2"/>
</dbReference>
<dbReference type="RefSeq" id="NP_001268385.1">
    <property type="nucleotide sequence ID" value="NM_001281456.2"/>
</dbReference>
<dbReference type="RefSeq" id="NP_696996.1">
    <property type="nucleotide sequence ID" value="NM_153321.3"/>
</dbReference>
<dbReference type="RefSeq" id="NP_696997.1">
    <property type="nucleotide sequence ID" value="NM_153322.3"/>
</dbReference>
<dbReference type="SMR" id="Q01453"/>
<dbReference type="BioGRID" id="111389">
    <property type="interactions" value="69"/>
</dbReference>
<dbReference type="ELM" id="Q01453"/>
<dbReference type="FunCoup" id="Q01453">
    <property type="interactions" value="717"/>
</dbReference>
<dbReference type="IntAct" id="Q01453">
    <property type="interactions" value="61"/>
</dbReference>
<dbReference type="STRING" id="9606.ENSP00000308937"/>
<dbReference type="ChEMBL" id="CHEMBL1293298"/>
<dbReference type="TCDB" id="1.H.1.2.2">
    <property type="family name" value="the claudin tight junction (claudin1) family"/>
</dbReference>
<dbReference type="GlyCosmos" id="Q01453">
    <property type="glycosylation" value="1 site, No reported glycans"/>
</dbReference>
<dbReference type="GlyGen" id="Q01453">
    <property type="glycosylation" value="1 site"/>
</dbReference>
<dbReference type="iPTMnet" id="Q01453"/>
<dbReference type="PhosphoSitePlus" id="Q01453"/>
<dbReference type="SwissPalm" id="Q01453"/>
<dbReference type="BioMuta" id="PMP22"/>
<dbReference type="DMDM" id="266803"/>
<dbReference type="jPOST" id="Q01453"/>
<dbReference type="MassIVE" id="Q01453"/>
<dbReference type="PaxDb" id="9606-ENSP00000484631"/>
<dbReference type="PeptideAtlas" id="Q01453"/>
<dbReference type="Antibodypedia" id="13113">
    <property type="antibodies" value="389 antibodies from 37 providers"/>
</dbReference>
<dbReference type="DNASU" id="5376"/>
<dbReference type="Ensembl" id="ENST00000312280.9">
    <property type="protein sequence ID" value="ENSP00000308937.3"/>
    <property type="gene ID" value="ENSG00000109099.16"/>
</dbReference>
<dbReference type="Ensembl" id="ENST00000612492.5">
    <property type="protein sequence ID" value="ENSP00000484631.1"/>
    <property type="gene ID" value="ENSG00000109099.16"/>
</dbReference>
<dbReference type="Ensembl" id="ENST00000674651.1">
    <property type="protein sequence ID" value="ENSP00000501727.1"/>
    <property type="gene ID" value="ENSG00000109099.16"/>
</dbReference>
<dbReference type="Ensembl" id="ENST00000674673.1">
    <property type="protein sequence ID" value="ENSP00000501804.1"/>
    <property type="gene ID" value="ENSG00000109099.16"/>
</dbReference>
<dbReference type="Ensembl" id="ENST00000674868.1">
    <property type="protein sequence ID" value="ENSP00000502835.1"/>
    <property type="gene ID" value="ENSG00000109099.16"/>
</dbReference>
<dbReference type="Ensembl" id="ENST00000675350.1">
    <property type="protein sequence ID" value="ENSP00000501557.1"/>
    <property type="gene ID" value="ENSG00000109099.16"/>
</dbReference>
<dbReference type="Ensembl" id="ENST00000675808.1">
    <property type="protein sequence ID" value="ENSP00000502310.1"/>
    <property type="gene ID" value="ENSG00000109099.16"/>
</dbReference>
<dbReference type="Ensembl" id="ENST00000675819.1">
    <property type="protein sequence ID" value="ENSP00000502018.1"/>
    <property type="gene ID" value="ENSG00000109099.16"/>
</dbReference>
<dbReference type="Ensembl" id="ENST00000675950.1">
    <property type="protein sequence ID" value="ENSP00000501546.1"/>
    <property type="gene ID" value="ENSG00000109099.16"/>
</dbReference>
<dbReference type="Ensembl" id="ENST00000676221.1">
    <property type="protein sequence ID" value="ENSP00000502601.1"/>
    <property type="gene ID" value="ENSG00000109099.16"/>
</dbReference>
<dbReference type="GeneID" id="5376"/>
<dbReference type="KEGG" id="hsa:5376"/>
<dbReference type="MANE-Select" id="ENST00000312280.9">
    <property type="protein sequence ID" value="ENSP00000308937.3"/>
    <property type="RefSeq nucleotide sequence ID" value="NM_000304.4"/>
    <property type="RefSeq protein sequence ID" value="NP_000295.1"/>
</dbReference>
<dbReference type="AGR" id="HGNC:9118"/>
<dbReference type="CTD" id="5376"/>
<dbReference type="DisGeNET" id="5376"/>
<dbReference type="GeneCards" id="PMP22"/>
<dbReference type="GeneReviews" id="PMP22"/>
<dbReference type="HGNC" id="HGNC:9118">
    <property type="gene designation" value="PMP22"/>
</dbReference>
<dbReference type="HPA" id="ENSG00000109099">
    <property type="expression patterns" value="Low tissue specificity"/>
</dbReference>
<dbReference type="MalaCards" id="PMP22"/>
<dbReference type="MIM" id="118220">
    <property type="type" value="phenotype"/>
</dbReference>
<dbReference type="MIM" id="118300">
    <property type="type" value="phenotype"/>
</dbReference>
<dbReference type="MIM" id="139393">
    <property type="type" value="phenotype"/>
</dbReference>
<dbReference type="MIM" id="145900">
    <property type="type" value="phenotype"/>
</dbReference>
<dbReference type="MIM" id="162500">
    <property type="type" value="phenotype"/>
</dbReference>
<dbReference type="MIM" id="601097">
    <property type="type" value="gene"/>
</dbReference>
<dbReference type="neXtProt" id="NX_Q01453"/>
<dbReference type="OpenTargets" id="ENSG00000109099"/>
<dbReference type="Orphanet" id="98916">
    <property type="disease" value="Acute inflammatory demyelinating polyradiculoneuropathy"/>
</dbReference>
<dbReference type="Orphanet" id="101081">
    <property type="disease" value="Charcot-Marie-Tooth disease type 1A"/>
</dbReference>
<dbReference type="Orphanet" id="90658">
    <property type="disease" value="Charcot-Marie-Tooth disease type 1E"/>
</dbReference>
<dbReference type="Orphanet" id="64748">
    <property type="disease" value="Dejerine-Sottas syndrome"/>
</dbReference>
<dbReference type="Orphanet" id="640">
    <property type="disease" value="Hereditary neuropathy with liability to pressure palsies"/>
</dbReference>
<dbReference type="Orphanet" id="3115">
    <property type="disease" value="Roussy-Levy syndrome"/>
</dbReference>
<dbReference type="PharmGKB" id="PA33444"/>
<dbReference type="VEuPathDB" id="HostDB:ENSG00000109099"/>
<dbReference type="eggNOG" id="ENOG502S0F5">
    <property type="taxonomic scope" value="Eukaryota"/>
</dbReference>
<dbReference type="GeneTree" id="ENSGT00950000182696"/>
<dbReference type="HOGENOM" id="CLU_138632_1_0_1"/>
<dbReference type="InParanoid" id="Q01453"/>
<dbReference type="OMA" id="HTADLWQ"/>
<dbReference type="OrthoDB" id="6084046at2759"/>
<dbReference type="PAN-GO" id="Q01453">
    <property type="GO annotations" value="2 GO annotations based on evolutionary models"/>
</dbReference>
<dbReference type="PhylomeDB" id="Q01453"/>
<dbReference type="TreeFam" id="TF330414"/>
<dbReference type="PathwayCommons" id="Q01453"/>
<dbReference type="Reactome" id="R-HSA-9619665">
    <property type="pathway name" value="EGR2 and SOX10-mediated initiation of Schwann cell myelination"/>
</dbReference>
<dbReference type="SignaLink" id="Q01453"/>
<dbReference type="SIGNOR" id="Q01453"/>
<dbReference type="BioGRID-ORCS" id="5376">
    <property type="hits" value="15 hits in 1158 CRISPR screens"/>
</dbReference>
<dbReference type="ChiTaRS" id="PMP22">
    <property type="organism name" value="human"/>
</dbReference>
<dbReference type="GeneWiki" id="Peripheral_myelin_protein_22"/>
<dbReference type="GenomeRNAi" id="5376"/>
<dbReference type="Pharos" id="Q01453">
    <property type="development level" value="Tbio"/>
</dbReference>
<dbReference type="PRO" id="PR:Q01453"/>
<dbReference type="Proteomes" id="UP000005640">
    <property type="component" value="Chromosome 17"/>
</dbReference>
<dbReference type="RNAct" id="Q01453">
    <property type="molecule type" value="protein"/>
</dbReference>
<dbReference type="Bgee" id="ENSG00000109099">
    <property type="expression patterns" value="Expressed in olfactory bulb and 208 other cell types or tissues"/>
</dbReference>
<dbReference type="ExpressionAtlas" id="Q01453">
    <property type="expression patterns" value="baseline and differential"/>
</dbReference>
<dbReference type="GO" id="GO:0005923">
    <property type="term" value="C:bicellular tight junction"/>
    <property type="evidence" value="ECO:0007669"/>
    <property type="project" value="Ensembl"/>
</dbReference>
<dbReference type="GO" id="GO:0043218">
    <property type="term" value="C:compact myelin"/>
    <property type="evidence" value="ECO:0007669"/>
    <property type="project" value="Ensembl"/>
</dbReference>
<dbReference type="GO" id="GO:0005886">
    <property type="term" value="C:plasma membrane"/>
    <property type="evidence" value="ECO:0000314"/>
    <property type="project" value="UniProtKB"/>
</dbReference>
<dbReference type="GO" id="GO:0045202">
    <property type="term" value="C:synapse"/>
    <property type="evidence" value="ECO:0007669"/>
    <property type="project" value="GOC"/>
</dbReference>
<dbReference type="GO" id="GO:0006915">
    <property type="term" value="P:apoptotic process"/>
    <property type="evidence" value="ECO:0000314"/>
    <property type="project" value="UniProtKB"/>
</dbReference>
<dbReference type="GO" id="GO:0032060">
    <property type="term" value="P:bleb assembly"/>
    <property type="evidence" value="ECO:0000314"/>
    <property type="project" value="UniProtKB"/>
</dbReference>
<dbReference type="GO" id="GO:0030154">
    <property type="term" value="P:cell differentiation"/>
    <property type="evidence" value="ECO:0007669"/>
    <property type="project" value="Ensembl"/>
</dbReference>
<dbReference type="GO" id="GO:0007268">
    <property type="term" value="P:chemical synaptic transmission"/>
    <property type="evidence" value="ECO:0000304"/>
    <property type="project" value="ProtInc"/>
</dbReference>
<dbReference type="GO" id="GO:0032288">
    <property type="term" value="P:myelin assembly"/>
    <property type="evidence" value="ECO:0000318"/>
    <property type="project" value="GO_Central"/>
</dbReference>
<dbReference type="GO" id="GO:0008285">
    <property type="term" value="P:negative regulation of cell population proliferation"/>
    <property type="evidence" value="ECO:0007669"/>
    <property type="project" value="Ensembl"/>
</dbReference>
<dbReference type="GO" id="GO:0010977">
    <property type="term" value="P:negative regulation of neuron projection development"/>
    <property type="evidence" value="ECO:0007669"/>
    <property type="project" value="Ensembl"/>
</dbReference>
<dbReference type="GO" id="GO:0007422">
    <property type="term" value="P:peripheral nervous system development"/>
    <property type="evidence" value="ECO:0000304"/>
    <property type="project" value="ProtInc"/>
</dbReference>
<dbReference type="FunFam" id="1.20.140.150:FF:000019">
    <property type="entry name" value="Peripheral myelin protein 22"/>
    <property type="match status" value="1"/>
</dbReference>
<dbReference type="Gene3D" id="1.20.140.150">
    <property type="match status" value="1"/>
</dbReference>
<dbReference type="InterPro" id="IPR050579">
    <property type="entry name" value="PMP-22/EMP/MP20-like"/>
</dbReference>
<dbReference type="InterPro" id="IPR003936">
    <property type="entry name" value="PMP22"/>
</dbReference>
<dbReference type="InterPro" id="IPR004031">
    <property type="entry name" value="PMP22/EMP/MP20/Claudin"/>
</dbReference>
<dbReference type="InterPro" id="IPR004032">
    <property type="entry name" value="PMP22_EMP_MP20"/>
</dbReference>
<dbReference type="PANTHER" id="PTHR10671">
    <property type="entry name" value="EPITHELIAL MEMBRANE PROTEIN-RELATED"/>
    <property type="match status" value="1"/>
</dbReference>
<dbReference type="PANTHER" id="PTHR10671:SF7">
    <property type="entry name" value="PERIPHERAL MYELIN PROTEIN 22"/>
    <property type="match status" value="1"/>
</dbReference>
<dbReference type="Pfam" id="PF00822">
    <property type="entry name" value="PMP22_Claudin"/>
    <property type="match status" value="1"/>
</dbReference>
<dbReference type="PRINTS" id="PR01453">
    <property type="entry name" value="EPMEMFAMILY"/>
</dbReference>
<dbReference type="PRINTS" id="PR01458">
    <property type="entry name" value="PMYELIN22"/>
</dbReference>
<dbReference type="PROSITE" id="PS01221">
    <property type="entry name" value="PMP22_1"/>
    <property type="match status" value="1"/>
</dbReference>
<dbReference type="PROSITE" id="PS01222">
    <property type="entry name" value="PMP22_2"/>
    <property type="match status" value="1"/>
</dbReference>
<organism>
    <name type="scientific">Homo sapiens</name>
    <name type="common">Human</name>
    <dbReference type="NCBI Taxonomy" id="9606"/>
    <lineage>
        <taxon>Eukaryota</taxon>
        <taxon>Metazoa</taxon>
        <taxon>Chordata</taxon>
        <taxon>Craniata</taxon>
        <taxon>Vertebrata</taxon>
        <taxon>Euteleostomi</taxon>
        <taxon>Mammalia</taxon>
        <taxon>Eutheria</taxon>
        <taxon>Euarchontoglires</taxon>
        <taxon>Primates</taxon>
        <taxon>Haplorrhini</taxon>
        <taxon>Catarrhini</taxon>
        <taxon>Hominidae</taxon>
        <taxon>Homo</taxon>
    </lineage>
</organism>
<feature type="chain" id="PRO_0000164650" description="Peripheral myelin protein 22">
    <location>
        <begin position="1"/>
        <end position="160"/>
    </location>
</feature>
<feature type="topological domain" description="Cytoplasmic" evidence="3">
    <location>
        <position position="1"/>
    </location>
</feature>
<feature type="transmembrane region" description="Helical" evidence="1">
    <location>
        <begin position="2"/>
        <end position="31"/>
    </location>
</feature>
<feature type="topological domain" description="Extracellular" evidence="3">
    <location>
        <begin position="32"/>
        <end position="64"/>
    </location>
</feature>
<feature type="transmembrane region" description="Helical" evidence="1">
    <location>
        <begin position="65"/>
        <end position="91"/>
    </location>
</feature>
<feature type="topological domain" description="Cytoplasmic" evidence="3">
    <location>
        <begin position="92"/>
        <end position="95"/>
    </location>
</feature>
<feature type="transmembrane region" description="Helical" evidence="1">
    <location>
        <begin position="96"/>
        <end position="119"/>
    </location>
</feature>
<feature type="topological domain" description="Extracellular" evidence="3">
    <location>
        <begin position="120"/>
        <end position="133"/>
    </location>
</feature>
<feature type="transmembrane region" description="Helical" evidence="1">
    <location>
        <begin position="134"/>
        <end position="156"/>
    </location>
</feature>
<feature type="topological domain" description="Cytoplasmic" evidence="3">
    <location>
        <begin position="157"/>
        <end position="160"/>
    </location>
</feature>
<feature type="glycosylation site" description="N-linked (GlcNAc...) asparagine" evidence="3">
    <location>
        <position position="41"/>
    </location>
</feature>
<feature type="sequence variant" id="VAR_006359" description="In DSS; dbSNP:rs104894622." evidence="25">
    <original>H</original>
    <variation>Q</variation>
    <location>
        <position position="12"/>
    </location>
</feature>
<feature type="sequence variant" id="VAR_006360" description="In CMT1A and DSS; dbSNP:rs104894617." evidence="13 19">
    <original>L</original>
    <variation>P</variation>
    <location>
        <position position="16"/>
    </location>
</feature>
<feature type="sequence variant" id="VAR_006361" description="In DSS." evidence="44">
    <original>L</original>
    <variation>P</variation>
    <location>
        <position position="19"/>
    </location>
</feature>
<feature type="sequence variant" id="VAR_029960" description="In HNPP and CMT1A; dbSNP:rs104894625." evidence="21">
    <original>S</original>
    <variation>F</variation>
    <location>
        <position position="22"/>
    </location>
</feature>
<feature type="sequence variant" id="VAR_029961" description="In CMT1E; dbSNP:rs906563423." evidence="20">
    <original>T</original>
    <variation>R</variation>
    <location>
        <position position="23"/>
    </location>
</feature>
<feature type="sequence variant" id="VAR_029962" description="In CMT1A." evidence="9">
    <location>
        <begin position="25"/>
        <end position="26"/>
    </location>
</feature>
<feature type="sequence variant" id="VAR_029963" description="In CMT1E; dbSNP:rs104894626." evidence="12">
    <original>W</original>
    <variation>R</variation>
    <location>
        <position position="28"/>
    </location>
</feature>
<feature type="sequence variant" id="VAR_009659" description="In HNPP; dbSNP:rs377335295." evidence="43">
    <original>V</original>
    <variation>M</variation>
    <location>
        <position position="30"/>
    </location>
</feature>
<feature type="sequence variant" id="VAR_009660" description="In CMT1A; with focally folded myelin sheaths; dbSNP:rs104894627." evidence="6">
    <original>D</original>
    <variation>V</variation>
    <location>
        <position position="37"/>
    </location>
</feature>
<feature type="sequence variant" id="VAR_029964" description="In CMT1A." evidence="16">
    <original>V</original>
    <variation>F</variation>
    <location>
        <position position="65"/>
    </location>
</feature>
<feature type="sequence variant" id="VAR_009661" description="In CMT1E; dbSNP:rs104894623." evidence="5">
    <original>A</original>
    <variation>P</variation>
    <location>
        <position position="67"/>
    </location>
</feature>
<feature type="sequence variant" id="VAR_029965" description="In HNPP; dbSNP:rs104894623." evidence="18">
    <original>A</original>
    <variation>T</variation>
    <location>
        <position position="67"/>
    </location>
</feature>
<feature type="sequence variant" id="VAR_006362" description="In DSS; dbSNP:rs104894620." evidence="26 27">
    <original>M</original>
    <variation>K</variation>
    <location>
        <position position="69"/>
    </location>
</feature>
<feature type="sequence variant" id="VAR_029966" description="In DSS." evidence="12">
    <original>L</original>
    <variation>P</variation>
    <location>
        <position position="71"/>
    </location>
</feature>
<feature type="sequence variant" id="VAR_006363" description="In DSS and CMT1A; dbSNP:rs104894621." evidence="10 11 14 24 26 27 34 41">
    <original>S</original>
    <variation>L</variation>
    <location>
        <position position="72"/>
    </location>
</feature>
<feature type="sequence variant" id="VAR_006364" description="In DSS.">
    <original>S</original>
    <variation>P</variation>
    <location>
        <position position="72"/>
    </location>
</feature>
<feature type="sequence variant" id="VAR_006365" description="In DSS." evidence="36">
    <original>S</original>
    <variation>W</variation>
    <location>
        <position position="72"/>
    </location>
</feature>
<feature type="sequence variant" id="VAR_006366" description="In DSS." evidence="36">
    <original>S</original>
    <variation>I</variation>
    <location>
        <position position="76"/>
    </location>
</feature>
<feature type="sequence variant" id="VAR_006367" description="In CMT1A; dbSNP:rs104894618." evidence="26 28">
    <original>S</original>
    <variation>C</variation>
    <location>
        <position position="79"/>
    </location>
</feature>
<feature type="sequence variant" id="VAR_006368" description="In DSS." evidence="38">
    <original>S</original>
    <variation>P</variation>
    <location>
        <position position="79"/>
    </location>
</feature>
<feature type="sequence variant" id="VAR_006369" description="In DSS." evidence="36">
    <original>L</original>
    <variation>P</variation>
    <location>
        <position position="80"/>
    </location>
</feature>
<feature type="sequence variant" id="VAR_029967" description="In DSS." evidence="13">
    <original>L</original>
    <variation>R</variation>
    <location>
        <position position="80"/>
    </location>
</feature>
<feature type="sequence variant" id="VAR_006370" description="In DSS." evidence="42">
    <location>
        <position position="84"/>
    </location>
</feature>
<feature type="sequence variant" id="VAR_009662" description="In CMT1A; dbSNP:rs778693173." evidence="31">
    <original>G</original>
    <variation>R</variation>
    <location>
        <position position="93"/>
    </location>
</feature>
<feature type="sequence variant" id="VAR_006371" description="In DSS." evidence="41">
    <original>G</original>
    <variation>E</variation>
    <location>
        <position position="100"/>
    </location>
</feature>
<feature type="sequence variant" id="VAR_006372" description="In DSS." evidence="37">
    <original>G</original>
    <variation>R</variation>
    <location>
        <position position="100"/>
    </location>
</feature>
<feature type="sequence variant" id="VAR_006373" description="In CMT1A and DSS." evidence="13 29">
    <original>L</original>
    <variation>R</variation>
    <location>
        <position position="105"/>
    </location>
</feature>
<feature type="sequence variant" id="VAR_006374" description="In CMT1A." evidence="35">
    <original>G</original>
    <variation>V</variation>
    <location>
        <position position="107"/>
    </location>
</feature>
<feature type="sequence variant" id="VAR_029968" description="In DSS." evidence="11">
    <original>C</original>
    <variation>R</variation>
    <location>
        <position position="109"/>
    </location>
</feature>
<feature type="sequence variant" id="VAR_029969" description="In CMT1E." evidence="17">
    <location>
        <begin position="115"/>
        <end position="118"/>
    </location>
</feature>
<feature type="sequence variant" id="VAR_006375" description="In CMT1A; dbSNP:rs104894619." evidence="9 22 26 32 39">
    <original>T</original>
    <variation>M</variation>
    <location>
        <position position="118"/>
    </location>
</feature>
<feature type="sequence variant" id="VAR_006376" description="In dbSNP:rs755551524.">
    <original>I</original>
    <variation>V</variation>
    <location>
        <position position="137"/>
    </location>
</feature>
<feature type="sequence variant" id="VAR_006377" description="In CMT1A." evidence="9 30">
    <original>L</original>
    <variation>R</variation>
    <location>
        <position position="147"/>
    </location>
</feature>
<feature type="sequence variant" id="VAR_029970" description="In DSS; dbSNP:rs775019409." evidence="8">
    <original>S</original>
    <variation>R</variation>
    <location>
        <position position="149"/>
    </location>
</feature>
<feature type="sequence variant" id="VAR_006378" description="In DSS; dbSNP:rs104894624." evidence="40">
    <original>G</original>
    <variation>C</variation>
    <location>
        <position position="150"/>
    </location>
</feature>
<feature type="sequence variant" id="VAR_006379" description="In DSS; dbSNP:rs879253954." evidence="33">
    <original>G</original>
    <variation>D</variation>
    <location>
        <position position="150"/>
    </location>
</feature>
<feature type="sequence variant" id="VAR_009663" description="In dbSNP:rs28936682." evidence="7">
    <original>R</original>
    <variation>G</variation>
    <location>
        <position position="157"/>
    </location>
</feature>
<feature type="sequence variant" id="VAR_009664" description="In DSS; dbSNP:rs28936682." evidence="4">
    <original>R</original>
    <variation>W</variation>
    <location>
        <position position="157"/>
    </location>
</feature>
<evidence type="ECO:0000250" key="1"/>
<evidence type="ECO:0000250" key="2">
    <source>
        <dbReference type="UniProtKB" id="P16646"/>
    </source>
</evidence>
<evidence type="ECO:0000255" key="3"/>
<evidence type="ECO:0000269" key="4">
    <source>
    </source>
</evidence>
<evidence type="ECO:0000269" key="5">
    <source>
    </source>
</evidence>
<evidence type="ECO:0000269" key="6">
    <source>
    </source>
</evidence>
<evidence type="ECO:0000269" key="7">
    <source>
    </source>
</evidence>
<evidence type="ECO:0000269" key="8">
    <source>
    </source>
</evidence>
<evidence type="ECO:0000269" key="9">
    <source>
    </source>
</evidence>
<evidence type="ECO:0000269" key="10">
    <source>
    </source>
</evidence>
<evidence type="ECO:0000269" key="11">
    <source>
    </source>
</evidence>
<evidence type="ECO:0000269" key="12">
    <source>
    </source>
</evidence>
<evidence type="ECO:0000269" key="13">
    <source>
    </source>
</evidence>
<evidence type="ECO:0000269" key="14">
    <source>
    </source>
</evidence>
<evidence type="ECO:0000269" key="15">
    <source>
    </source>
</evidence>
<evidence type="ECO:0000269" key="16">
    <source>
    </source>
</evidence>
<evidence type="ECO:0000269" key="17">
    <source>
    </source>
</evidence>
<evidence type="ECO:0000269" key="18">
    <source>
    </source>
</evidence>
<evidence type="ECO:0000269" key="19">
    <source>
    </source>
</evidence>
<evidence type="ECO:0000269" key="20">
    <source>
    </source>
</evidence>
<evidence type="ECO:0000269" key="21">
    <source>
    </source>
</evidence>
<evidence type="ECO:0000269" key="22">
    <source>
    </source>
</evidence>
<evidence type="ECO:0000269" key="23">
    <source>
    </source>
</evidence>
<evidence type="ECO:0000269" key="24">
    <source>
    </source>
</evidence>
<evidence type="ECO:0000269" key="25">
    <source>
    </source>
</evidence>
<evidence type="ECO:0000269" key="26">
    <source>
    </source>
</evidence>
<evidence type="ECO:0000269" key="27">
    <source>
    </source>
</evidence>
<evidence type="ECO:0000269" key="28">
    <source>
    </source>
</evidence>
<evidence type="ECO:0000269" key="29">
    <source>
    </source>
</evidence>
<evidence type="ECO:0000269" key="30">
    <source>
    </source>
</evidence>
<evidence type="ECO:0000269" key="31">
    <source>
    </source>
</evidence>
<evidence type="ECO:0000269" key="32">
    <source>
    </source>
</evidence>
<evidence type="ECO:0000269" key="33">
    <source>
    </source>
</evidence>
<evidence type="ECO:0000269" key="34">
    <source>
    </source>
</evidence>
<evidence type="ECO:0000269" key="35">
    <source>
    </source>
</evidence>
<evidence type="ECO:0000269" key="36">
    <source>
    </source>
</evidence>
<evidence type="ECO:0000269" key="37">
    <source>
    </source>
</evidence>
<evidence type="ECO:0000269" key="38">
    <source>
    </source>
</evidence>
<evidence type="ECO:0000269" key="39">
    <source>
    </source>
</evidence>
<evidence type="ECO:0000269" key="40">
    <source>
    </source>
</evidence>
<evidence type="ECO:0000269" key="41">
    <source>
    </source>
</evidence>
<evidence type="ECO:0000269" key="42">
    <source>
    </source>
</evidence>
<evidence type="ECO:0000269" key="43">
    <source>
    </source>
</evidence>
<evidence type="ECO:0000269" key="44">
    <source>
    </source>
</evidence>
<evidence type="ECO:0000305" key="45"/>
<protein>
    <recommendedName>
        <fullName>Peripheral myelin protein 22</fullName>
        <shortName>PMP-22</shortName>
    </recommendedName>
    <alternativeName>
        <fullName>Growth arrest-specific protein 3</fullName>
        <shortName>GAS-3</shortName>
    </alternativeName>
</protein>